<comment type="function">
    <text evidence="1">Required for spatial organization of the terminus region of the chromosome (Ter macrodomain) during the cell cycle. Prevents early segregation of duplicated Ter macrodomains during cell division. Binds specifically to matS, which is a 13 bp signature motif repeated within the Ter macrodomain.</text>
</comment>
<comment type="subunit">
    <text evidence="1">Homodimer.</text>
</comment>
<comment type="subcellular location">
    <subcellularLocation>
        <location evidence="1">Cytoplasm</location>
    </subcellularLocation>
</comment>
<comment type="similarity">
    <text evidence="1">Belongs to the MatP family.</text>
</comment>
<name>MATP_ECO24</name>
<gene>
    <name evidence="1" type="primary">matP</name>
    <name type="ordered locus">EcE24377A_1070</name>
</gene>
<accession>A7ZK59</accession>
<feature type="chain" id="PRO_1000064623" description="Macrodomain Ter protein">
    <location>
        <begin position="1"/>
        <end position="150"/>
    </location>
</feature>
<protein>
    <recommendedName>
        <fullName evidence="1">Macrodomain Ter protein</fullName>
    </recommendedName>
</protein>
<proteinExistence type="inferred from homology"/>
<keyword id="KW-0131">Cell cycle</keyword>
<keyword id="KW-0132">Cell division</keyword>
<keyword id="KW-0963">Cytoplasm</keyword>
<keyword id="KW-0238">DNA-binding</keyword>
<keyword id="KW-1185">Reference proteome</keyword>
<organism>
    <name type="scientific">Escherichia coli O139:H28 (strain E24377A / ETEC)</name>
    <dbReference type="NCBI Taxonomy" id="331111"/>
    <lineage>
        <taxon>Bacteria</taxon>
        <taxon>Pseudomonadati</taxon>
        <taxon>Pseudomonadota</taxon>
        <taxon>Gammaproteobacteria</taxon>
        <taxon>Enterobacterales</taxon>
        <taxon>Enterobacteriaceae</taxon>
        <taxon>Escherichia</taxon>
    </lineage>
</organism>
<sequence>MKYQQLENLESGWKWKYLVKKHREGELITRYIEASAAQEAVDVLLSLENEPVLVNGWIDKHMNPELVNRMKQTIRARRKRHFNAEHQHTRKKSIDLEFIVWQRLAGLAQRRGKTLSETIVQLIEDAENKEKYANKMSSLKHDLQALLGKE</sequence>
<evidence type="ECO:0000255" key="1">
    <source>
        <dbReference type="HAMAP-Rule" id="MF_01073"/>
    </source>
</evidence>
<reference key="1">
    <citation type="journal article" date="2008" name="J. Bacteriol.">
        <title>The pangenome structure of Escherichia coli: comparative genomic analysis of E. coli commensal and pathogenic isolates.</title>
        <authorList>
            <person name="Rasko D.A."/>
            <person name="Rosovitz M.J."/>
            <person name="Myers G.S.A."/>
            <person name="Mongodin E.F."/>
            <person name="Fricke W.F."/>
            <person name="Gajer P."/>
            <person name="Crabtree J."/>
            <person name="Sebaihia M."/>
            <person name="Thomson N.R."/>
            <person name="Chaudhuri R."/>
            <person name="Henderson I.R."/>
            <person name="Sperandio V."/>
            <person name="Ravel J."/>
        </authorList>
    </citation>
    <scope>NUCLEOTIDE SEQUENCE [LARGE SCALE GENOMIC DNA]</scope>
    <source>
        <strain>E24377A / ETEC</strain>
    </source>
</reference>
<dbReference type="EMBL" id="CP000800">
    <property type="protein sequence ID" value="ABV20383.1"/>
    <property type="molecule type" value="Genomic_DNA"/>
</dbReference>
<dbReference type="RefSeq" id="WP_000877158.1">
    <property type="nucleotide sequence ID" value="NC_009801.1"/>
</dbReference>
<dbReference type="SMR" id="A7ZK59"/>
<dbReference type="GeneID" id="75204047"/>
<dbReference type="KEGG" id="ecw:EcE24377A_1070"/>
<dbReference type="HOGENOM" id="CLU_142157_0_0_6"/>
<dbReference type="Proteomes" id="UP000001122">
    <property type="component" value="Chromosome"/>
</dbReference>
<dbReference type="GO" id="GO:0005737">
    <property type="term" value="C:cytoplasm"/>
    <property type="evidence" value="ECO:0007669"/>
    <property type="project" value="UniProtKB-SubCell"/>
</dbReference>
<dbReference type="GO" id="GO:0043565">
    <property type="term" value="F:sequence-specific DNA binding"/>
    <property type="evidence" value="ECO:0007669"/>
    <property type="project" value="UniProtKB-UniRule"/>
</dbReference>
<dbReference type="GO" id="GO:0051301">
    <property type="term" value="P:cell division"/>
    <property type="evidence" value="ECO:0007669"/>
    <property type="project" value="UniProtKB-UniRule"/>
</dbReference>
<dbReference type="GO" id="GO:0006355">
    <property type="term" value="P:regulation of DNA-templated transcription"/>
    <property type="evidence" value="ECO:0007669"/>
    <property type="project" value="InterPro"/>
</dbReference>
<dbReference type="FunFam" id="1.10.1220.10:FF:000004">
    <property type="entry name" value="Macrodomain Ter protein"/>
    <property type="match status" value="1"/>
</dbReference>
<dbReference type="FunFam" id="1.20.1270.380:FF:000001">
    <property type="entry name" value="Macrodomain Ter protein"/>
    <property type="match status" value="1"/>
</dbReference>
<dbReference type="Gene3D" id="1.20.1270.380">
    <property type="entry name" value="MatP, N-terminal domain"/>
    <property type="match status" value="1"/>
</dbReference>
<dbReference type="Gene3D" id="1.10.1220.10">
    <property type="entry name" value="Met repressor-like"/>
    <property type="match status" value="1"/>
</dbReference>
<dbReference type="HAMAP" id="MF_01073">
    <property type="entry name" value="MatP"/>
    <property type="match status" value="1"/>
</dbReference>
<dbReference type="InterPro" id="IPR013321">
    <property type="entry name" value="Arc_rbn_hlx_hlx"/>
</dbReference>
<dbReference type="InterPro" id="IPR009390">
    <property type="entry name" value="MatP"/>
</dbReference>
<dbReference type="InterPro" id="IPR035375">
    <property type="entry name" value="MatP_C"/>
</dbReference>
<dbReference type="InterPro" id="IPR035087">
    <property type="entry name" value="MatP_N"/>
</dbReference>
<dbReference type="InterPro" id="IPR038339">
    <property type="entry name" value="MatP_N_sf"/>
</dbReference>
<dbReference type="NCBIfam" id="NF003471">
    <property type="entry name" value="PRK05097.1"/>
    <property type="match status" value="1"/>
</dbReference>
<dbReference type="Pfam" id="PF06303">
    <property type="entry name" value="MatP"/>
    <property type="match status" value="1"/>
</dbReference>
<dbReference type="Pfam" id="PF17414">
    <property type="entry name" value="MatP_C"/>
    <property type="match status" value="1"/>
</dbReference>